<gene>
    <name type="primary">colgalt1-a</name>
    <name type="synonym">glt25d1-a</name>
</gene>
<comment type="function">
    <text evidence="1">Beta-galactosyltransferase that transfers beta-galactose to hydroxylysine residues of type I collagen. By acting on collagen glycosylation, facilitates the formation of collagen triple helix.</text>
</comment>
<comment type="catalytic activity">
    <reaction evidence="1">
        <text>(5R)-5-hydroxy-L-lysyl-[collagen] + UDP-alpha-D-galactose = (5R)-5-O-(beta-D-galactosyl)-5-hydroxy-L-lysyl-[collagen] + UDP + H(+)</text>
        <dbReference type="Rhea" id="RHEA:12637"/>
        <dbReference type="Rhea" id="RHEA-COMP:12752"/>
        <dbReference type="Rhea" id="RHEA-COMP:12753"/>
        <dbReference type="ChEBI" id="CHEBI:15378"/>
        <dbReference type="ChEBI" id="CHEBI:58223"/>
        <dbReference type="ChEBI" id="CHEBI:66914"/>
        <dbReference type="ChEBI" id="CHEBI:133442"/>
        <dbReference type="ChEBI" id="CHEBI:133443"/>
        <dbReference type="EC" id="2.4.1.50"/>
    </reaction>
</comment>
<comment type="subcellular location">
    <subcellularLocation>
        <location evidence="3">Endoplasmic reticulum lumen</location>
    </subcellularLocation>
</comment>
<comment type="similarity">
    <text evidence="5">Belongs to the glycosyltransferase 25 family.</text>
</comment>
<accession>A0JPH3</accession>
<evidence type="ECO:0000250" key="1">
    <source>
        <dbReference type="UniProtKB" id="Q8NBJ5"/>
    </source>
</evidence>
<evidence type="ECO:0000255" key="2"/>
<evidence type="ECO:0000255" key="3">
    <source>
        <dbReference type="PROSITE-ProRule" id="PRU10138"/>
    </source>
</evidence>
<evidence type="ECO:0000256" key="4">
    <source>
        <dbReference type="SAM" id="MobiDB-lite"/>
    </source>
</evidence>
<evidence type="ECO:0000305" key="5"/>
<keyword id="KW-0256">Endoplasmic reticulum</keyword>
<keyword id="KW-0325">Glycoprotein</keyword>
<keyword id="KW-0328">Glycosyltransferase</keyword>
<keyword id="KW-1185">Reference proteome</keyword>
<keyword id="KW-0732">Signal</keyword>
<keyword id="KW-0808">Transferase</keyword>
<organism>
    <name type="scientific">Xenopus laevis</name>
    <name type="common">African clawed frog</name>
    <dbReference type="NCBI Taxonomy" id="8355"/>
    <lineage>
        <taxon>Eukaryota</taxon>
        <taxon>Metazoa</taxon>
        <taxon>Chordata</taxon>
        <taxon>Craniata</taxon>
        <taxon>Vertebrata</taxon>
        <taxon>Euteleostomi</taxon>
        <taxon>Amphibia</taxon>
        <taxon>Batrachia</taxon>
        <taxon>Anura</taxon>
        <taxon>Pipoidea</taxon>
        <taxon>Pipidae</taxon>
        <taxon>Xenopodinae</taxon>
        <taxon>Xenopus</taxon>
        <taxon>Xenopus</taxon>
    </lineage>
</organism>
<dbReference type="EC" id="2.4.1.50" evidence="1"/>
<dbReference type="EMBL" id="BC127422">
    <property type="protein sequence ID" value="AAI27423.1"/>
    <property type="molecule type" value="mRNA"/>
</dbReference>
<dbReference type="RefSeq" id="NP_001096660.1">
    <property type="nucleotide sequence ID" value="NM_001103190.1"/>
</dbReference>
<dbReference type="SMR" id="A0JPH3"/>
<dbReference type="CAZy" id="GT25">
    <property type="family name" value="Glycosyltransferase Family 25"/>
</dbReference>
<dbReference type="GlyCosmos" id="A0JPH3">
    <property type="glycosylation" value="5 sites, No reported glycans"/>
</dbReference>
<dbReference type="DNASU" id="100125229"/>
<dbReference type="GeneID" id="100125229"/>
<dbReference type="KEGG" id="xla:100125229"/>
<dbReference type="AGR" id="Xenbase:XB-GENE-952958"/>
<dbReference type="CTD" id="100125229"/>
<dbReference type="Xenbase" id="XB-GENE-952958">
    <property type="gene designation" value="colgalt1.L"/>
</dbReference>
<dbReference type="OrthoDB" id="47375at2759"/>
<dbReference type="Proteomes" id="UP000186698">
    <property type="component" value="Chromosome 3L"/>
</dbReference>
<dbReference type="Bgee" id="100125229">
    <property type="expression patterns" value="Expressed in internal ear and 19 other cell types or tissues"/>
</dbReference>
<dbReference type="GO" id="GO:0005788">
    <property type="term" value="C:endoplasmic reticulum lumen"/>
    <property type="evidence" value="ECO:0000250"/>
    <property type="project" value="UniProtKB"/>
</dbReference>
<dbReference type="GO" id="GO:0050211">
    <property type="term" value="F:procollagen galactosyltransferase activity"/>
    <property type="evidence" value="ECO:0000250"/>
    <property type="project" value="UniProtKB"/>
</dbReference>
<dbReference type="GO" id="GO:1904028">
    <property type="term" value="P:positive regulation of collagen fibril organization"/>
    <property type="evidence" value="ECO:0000250"/>
    <property type="project" value="UniProtKB"/>
</dbReference>
<dbReference type="CDD" id="cd00761">
    <property type="entry name" value="Glyco_tranf_GTA_type"/>
    <property type="match status" value="1"/>
</dbReference>
<dbReference type="CDD" id="cd06532">
    <property type="entry name" value="Glyco_transf_25"/>
    <property type="match status" value="1"/>
</dbReference>
<dbReference type="FunFam" id="3.90.550.10:FF:000048">
    <property type="entry name" value="Glycosyltransferase 25 family member 1"/>
    <property type="match status" value="1"/>
</dbReference>
<dbReference type="Gene3D" id="3.90.550.10">
    <property type="entry name" value="Spore Coat Polysaccharide Biosynthesis Protein SpsA, Chain A"/>
    <property type="match status" value="1"/>
</dbReference>
<dbReference type="InterPro" id="IPR050757">
    <property type="entry name" value="Collagen_mod_GT25"/>
</dbReference>
<dbReference type="InterPro" id="IPR002654">
    <property type="entry name" value="Glyco_trans_25"/>
</dbReference>
<dbReference type="InterPro" id="IPR029044">
    <property type="entry name" value="Nucleotide-diphossugar_trans"/>
</dbReference>
<dbReference type="PANTHER" id="PTHR10730:SF28">
    <property type="entry name" value="PROCOLLAGEN GALACTOSYLTRANSFERASE 1"/>
    <property type="match status" value="1"/>
</dbReference>
<dbReference type="PANTHER" id="PTHR10730">
    <property type="entry name" value="PROCOLLAGEN-LYSINE,2-OXOGLUTARATE 5-DIOXYGENASE/GLYCOSYLTRANSFERASE 25 FAMILY MEMBER"/>
    <property type="match status" value="1"/>
</dbReference>
<dbReference type="Pfam" id="PF03452">
    <property type="entry name" value="Anp1"/>
    <property type="match status" value="1"/>
</dbReference>
<dbReference type="Pfam" id="PF01755">
    <property type="entry name" value="Glyco_transf_25"/>
    <property type="match status" value="1"/>
</dbReference>
<dbReference type="SUPFAM" id="SSF53448">
    <property type="entry name" value="Nucleotide-diphospho-sugar transferases"/>
    <property type="match status" value="1"/>
</dbReference>
<dbReference type="PROSITE" id="PS00014">
    <property type="entry name" value="ER_TARGET"/>
    <property type="match status" value="1"/>
</dbReference>
<protein>
    <recommendedName>
        <fullName>Procollagen galactosyltransferase 1-A</fullName>
        <ecNumber evidence="1">2.4.1.50</ecNumber>
    </recommendedName>
    <alternativeName>
        <fullName>Collagen beta(1-O)galactosyltransferase 1-A</fullName>
    </alternativeName>
    <alternativeName>
        <fullName>Glycosyltransferase 25 family member 1-A</fullName>
    </alternativeName>
    <alternativeName>
        <fullName>Hydroxylysine galactosyltransferase 1-A</fullName>
    </alternativeName>
</protein>
<reference key="1">
    <citation type="submission" date="2006-11" db="EMBL/GenBank/DDBJ databases">
        <authorList>
            <consortium name="NIH - Xenopus Gene Collection (XGC) project"/>
        </authorList>
    </citation>
    <scope>NUCLEOTIDE SEQUENCE [LARGE SCALE MRNA]</scope>
    <source>
        <tissue>Ovary</tissue>
    </source>
</reference>
<name>G251A_XENLA</name>
<sequence length="611" mass="71389">MSQAGVDRLLRGLQLLLLVLRLSAGYFPEERWNPESSLRNPTVLIALLARNSEGSLPEVLGALDTLHYPKERISLWVATDHNLDNTTEILREWLINVQNQYHHVEWRPQEHPRWFKDEEGPKHWSHSRYEYIMKLRQAALTSAREMWADYIFFLDADNLLTNPETLNLLIAENKTVVAPMLDSRAAYSNFWCGMTTQGYYRRTPAYMPIRRRERRGCFPVPMVHSTFLIDLRKEASQQLNFYPPHADYTWAFDDIIVFAFSCRQADVQMFLCNKEIYGHLPVPLRSHGTLLDEADNFVHTKLEVMVKGPPLNLSSFVTIPEKVPDKMSFDEVFLINLKHRQDRRERMKRTLYELQIDYKLVDAVYGKTLNQTQVSELGIKMLPDYKDPYHGRPLTRGEMGCFLSHYNIWKEISERNLAVSAVFEDDLRFEIYFKRRLQTLLHDLETAKLDWDLIYLGRKRMQVDEPEEPVPGVRNLVVSDYSYWTLGYLISLRGAKKLLNAEPLVKMLPVDEFLPVMYDKHPISDYSSHFSPRDLLAFSVEPLLLYPTHYTGDEGYISDTETSVLWDNLTEPTDWDRAKSRKTQQQEKLRSEALNSPSLGSPFDNTARDEL</sequence>
<feature type="signal peptide" evidence="2">
    <location>
        <begin position="1"/>
        <end position="24"/>
    </location>
</feature>
<feature type="chain" id="PRO_0000309539" description="Procollagen galactosyltransferase 1-A">
    <location>
        <begin position="25"/>
        <end position="611"/>
    </location>
</feature>
<feature type="region of interest" description="Disordered" evidence="4">
    <location>
        <begin position="575"/>
        <end position="611"/>
    </location>
</feature>
<feature type="short sequence motif" description="Prevents secretion from ER" evidence="3">
    <location>
        <begin position="608"/>
        <end position="611"/>
    </location>
</feature>
<feature type="compositionally biased region" description="Basic and acidic residues" evidence="4">
    <location>
        <begin position="575"/>
        <end position="591"/>
    </location>
</feature>
<feature type="glycosylation site" description="N-linked (GlcNAc...) asparagine" evidence="2">
    <location>
        <position position="85"/>
    </location>
</feature>
<feature type="glycosylation site" description="N-linked (GlcNAc...) asparagine" evidence="2">
    <location>
        <position position="173"/>
    </location>
</feature>
<feature type="glycosylation site" description="N-linked (GlcNAc...) asparagine" evidence="2">
    <location>
        <position position="312"/>
    </location>
</feature>
<feature type="glycosylation site" description="N-linked (GlcNAc...) asparagine" evidence="2">
    <location>
        <position position="370"/>
    </location>
</feature>
<feature type="glycosylation site" description="N-linked (GlcNAc...) asparagine" evidence="2">
    <location>
        <position position="568"/>
    </location>
</feature>
<proteinExistence type="evidence at transcript level"/>